<dbReference type="EMBL" id="CM000070">
    <property type="protein sequence ID" value="EAL29024.2"/>
    <property type="molecule type" value="Genomic_DNA"/>
</dbReference>
<dbReference type="RefSeq" id="XP_001359872.2">
    <property type="nucleotide sequence ID" value="XM_001359835.3"/>
</dbReference>
<dbReference type="SMR" id="Q294E0"/>
<dbReference type="FunCoup" id="Q294E0">
    <property type="interactions" value="2275"/>
</dbReference>
<dbReference type="STRING" id="46245.Q294E0"/>
<dbReference type="EnsemblMetazoa" id="FBtr0282680">
    <property type="protein sequence ID" value="FBpp0281118"/>
    <property type="gene ID" value="FBgn0078475"/>
</dbReference>
<dbReference type="GeneID" id="4803072"/>
<dbReference type="KEGG" id="dpo:4803072"/>
<dbReference type="CTD" id="42389"/>
<dbReference type="eggNOG" id="KOG2053">
    <property type="taxonomic scope" value="Eukaryota"/>
</dbReference>
<dbReference type="HOGENOM" id="CLU_008075_0_0_1"/>
<dbReference type="InParanoid" id="Q294E0"/>
<dbReference type="OMA" id="WKRREHQ"/>
<dbReference type="Proteomes" id="UP000001819">
    <property type="component" value="Chromosome 2"/>
</dbReference>
<dbReference type="Bgee" id="FBgn0078475">
    <property type="expression patterns" value="Expressed in adult organism and 3 other cell types or tissues"/>
</dbReference>
<dbReference type="ExpressionAtlas" id="Q294E0">
    <property type="expression patterns" value="baseline"/>
</dbReference>
<dbReference type="GO" id="GO:0005764">
    <property type="term" value="C:lysosome"/>
    <property type="evidence" value="ECO:0000250"/>
    <property type="project" value="UniProtKB"/>
</dbReference>
<dbReference type="GO" id="GO:0031416">
    <property type="term" value="C:NatB complex"/>
    <property type="evidence" value="ECO:0007669"/>
    <property type="project" value="TreeGrafter"/>
</dbReference>
<dbReference type="GO" id="GO:0006955">
    <property type="term" value="P:immune response"/>
    <property type="evidence" value="ECO:0000250"/>
    <property type="project" value="UniProtKB"/>
</dbReference>
<dbReference type="GO" id="GO:0045087">
    <property type="term" value="P:innate immune response"/>
    <property type="evidence" value="ECO:0007669"/>
    <property type="project" value="UniProtKB-KW"/>
</dbReference>
<dbReference type="GO" id="GO:0006911">
    <property type="term" value="P:phagocytosis, engulfment"/>
    <property type="evidence" value="ECO:0000250"/>
    <property type="project" value="UniProtKB"/>
</dbReference>
<dbReference type="FunFam" id="1.25.40.1040:FF:000010">
    <property type="entry name" value="Phagocyte signaling-impaired protein"/>
    <property type="match status" value="1"/>
</dbReference>
<dbReference type="Gene3D" id="1.25.40.1040">
    <property type="match status" value="1"/>
</dbReference>
<dbReference type="InterPro" id="IPR019183">
    <property type="entry name" value="NAA25_NatB_aux_su"/>
</dbReference>
<dbReference type="InterPro" id="IPR011990">
    <property type="entry name" value="TPR-like_helical_dom_sf"/>
</dbReference>
<dbReference type="PANTHER" id="PTHR22767:SF3">
    <property type="entry name" value="N-ALPHA-ACETYLTRANSFERASE 25, NATB AUXILIARY SUBUNIT"/>
    <property type="match status" value="1"/>
</dbReference>
<dbReference type="PANTHER" id="PTHR22767">
    <property type="entry name" value="N-TERMINAL ACETYLTRANSFERASE-RELATED"/>
    <property type="match status" value="1"/>
</dbReference>
<dbReference type="Pfam" id="PF09797">
    <property type="entry name" value="NatB_MDM20"/>
    <property type="match status" value="1"/>
</dbReference>
<dbReference type="SUPFAM" id="SSF48452">
    <property type="entry name" value="TPR-like"/>
    <property type="match status" value="1"/>
</dbReference>
<dbReference type="PROSITE" id="PS50293">
    <property type="entry name" value="TPR_REGION"/>
    <property type="match status" value="1"/>
</dbReference>
<organism>
    <name type="scientific">Drosophila pseudoobscura pseudoobscura</name>
    <name type="common">Fruit fly</name>
    <dbReference type="NCBI Taxonomy" id="46245"/>
    <lineage>
        <taxon>Eukaryota</taxon>
        <taxon>Metazoa</taxon>
        <taxon>Ecdysozoa</taxon>
        <taxon>Arthropoda</taxon>
        <taxon>Hexapoda</taxon>
        <taxon>Insecta</taxon>
        <taxon>Pterygota</taxon>
        <taxon>Neoptera</taxon>
        <taxon>Endopterygota</taxon>
        <taxon>Diptera</taxon>
        <taxon>Brachycera</taxon>
        <taxon>Muscomorpha</taxon>
        <taxon>Ephydroidea</taxon>
        <taxon>Drosophilidae</taxon>
        <taxon>Drosophila</taxon>
        <taxon>Sophophora</taxon>
    </lineage>
</organism>
<proteinExistence type="inferred from homology"/>
<gene>
    <name evidence="2" type="primary">psidin</name>
    <name type="ORF">GA18473</name>
</gene>
<reference key="1">
    <citation type="journal article" date="2005" name="Genome Res.">
        <title>Comparative genome sequencing of Drosophila pseudoobscura: chromosomal, gene, and cis-element evolution.</title>
        <authorList>
            <person name="Richards S."/>
            <person name="Liu Y."/>
            <person name="Bettencourt B.R."/>
            <person name="Hradecky P."/>
            <person name="Letovsky S."/>
            <person name="Nielsen R."/>
            <person name="Thornton K."/>
            <person name="Hubisz M.J."/>
            <person name="Chen R."/>
            <person name="Meisel R.P."/>
            <person name="Couronne O."/>
            <person name="Hua S."/>
            <person name="Smith M.A."/>
            <person name="Zhang P."/>
            <person name="Liu J."/>
            <person name="Bussemaker H.J."/>
            <person name="van Batenburg M.F."/>
            <person name="Howells S.L."/>
            <person name="Scherer S.E."/>
            <person name="Sodergren E."/>
            <person name="Matthews B.B."/>
            <person name="Crosby M.A."/>
            <person name="Schroeder A.J."/>
            <person name="Ortiz-Barrientos D."/>
            <person name="Rives C.M."/>
            <person name="Metzker M.L."/>
            <person name="Muzny D.M."/>
            <person name="Scott G."/>
            <person name="Steffen D."/>
            <person name="Wheeler D.A."/>
            <person name="Worley K.C."/>
            <person name="Havlak P."/>
            <person name="Durbin K.J."/>
            <person name="Egan A."/>
            <person name="Gill R."/>
            <person name="Hume J."/>
            <person name="Morgan M.B."/>
            <person name="Miner G."/>
            <person name="Hamilton C."/>
            <person name="Huang Y."/>
            <person name="Waldron L."/>
            <person name="Verduzco D."/>
            <person name="Clerc-Blankenburg K.P."/>
            <person name="Dubchak I."/>
            <person name="Noor M.A.F."/>
            <person name="Anderson W."/>
            <person name="White K.P."/>
            <person name="Clark A.G."/>
            <person name="Schaeffer S.W."/>
            <person name="Gelbart W.M."/>
            <person name="Weinstock G.M."/>
            <person name="Gibbs R.A."/>
        </authorList>
    </citation>
    <scope>NUCLEOTIDE SEQUENCE [LARGE SCALE GENOMIC DNA]</scope>
    <source>
        <strain>MV2-25 / Tucson 14011-0121.94</strain>
    </source>
</reference>
<accession>Q294E0</accession>
<comment type="function">
    <text evidence="1">Non-catalytic subunit of the NatB complex which catalyzes acetylation of the N-terminal methionine residues of proteins beginning with Met-Asp or Met-Glu (By similarity). Has 2 roles in the larval immune response: required both for the phagocytic degradation of internalized bacteria and for the induction of Defensin in the fat body. Within the phagocytic blood cells, has a role in detection of infection and activation of the humoral immune response (By similarity).</text>
</comment>
<comment type="subunit">
    <text evidence="1">Component of the N-terminal acetyltransferase B (NatB) complex.</text>
</comment>
<comment type="subcellular location">
    <subcellularLocation>
        <location evidence="2">Lysosome</location>
    </subcellularLocation>
    <text evidence="2">Blood cell lysosomes.</text>
</comment>
<comment type="similarity">
    <text evidence="4">Belongs to the MDM20/NAA25 family.</text>
</comment>
<evidence type="ECO:0000250" key="1"/>
<evidence type="ECO:0000250" key="2">
    <source>
        <dbReference type="UniProtKB" id="Q9VDQ7"/>
    </source>
</evidence>
<evidence type="ECO:0000256" key="3">
    <source>
        <dbReference type="SAM" id="MobiDB-lite"/>
    </source>
</evidence>
<evidence type="ECO:0000305" key="4"/>
<name>NAA25_DROPS</name>
<protein>
    <recommendedName>
        <fullName>Phagocyte signaling-impaired protein</fullName>
    </recommendedName>
    <alternativeName>
        <fullName>N-terminal acetyltransferase B complex subunit MDM20 homolog</fullName>
    </alternativeName>
    <alternativeName>
        <fullName>N-terminal acetyltransferase B complex subunit NAA25 homolog</fullName>
    </alternativeName>
</protein>
<keyword id="KW-0929">Antimicrobial</keyword>
<keyword id="KW-0391">Immunity</keyword>
<keyword id="KW-0399">Innate immunity</keyword>
<keyword id="KW-0458">Lysosome</keyword>
<keyword id="KW-1185">Reference proteome</keyword>
<keyword id="KW-0677">Repeat</keyword>
<keyword id="KW-0802">TPR repeat</keyword>
<feature type="chain" id="PRO_0000314626" description="Phagocyte signaling-impaired protein">
    <location>
        <begin position="1"/>
        <end position="962"/>
    </location>
</feature>
<feature type="repeat" description="TPR 1">
    <location>
        <begin position="45"/>
        <end position="78"/>
    </location>
</feature>
<feature type="repeat" description="TPR 2">
    <location>
        <begin position="79"/>
        <end position="112"/>
    </location>
</feature>
<feature type="repeat" description="TPR 3">
    <location>
        <begin position="523"/>
        <end position="560"/>
    </location>
</feature>
<feature type="region of interest" description="Disordered" evidence="3">
    <location>
        <begin position="856"/>
        <end position="880"/>
    </location>
</feature>
<sequence>MAHQGMDTALFERRLRPIYDNLEVGNNRKALQESEKLLRKHPSMLCARALKGLALLRLGRYEESHGCLQAVAEDKPTDDSTLQVLSFCYREMEQLNKIVELYQHAVKKNPGNEELLAHLFISYVRVEDYKAQQAVALQLYKAQPKNAYYFWSVISVVFQGIRGPESAVPEKRKIYLGLAQRMVEKHIREGKLESEQEAFLYLHILKLQKKFQEAWEFLTGELCAKLYPGAPVSMKFELLKVLGNWRELNELLQQLLDADRDRWDYYKEYIQSCFEILKLPITEGATEEKKFSLSACQEFLQGIIDSSERKKRGPYLARLELHQRMRAHQLPADQLIGDFDELVVEYFSLFADKSCCTHDIALFLPSVSMKQRQALANKLLLESGVSSTSLPMNKEQMQKHICALQISRMCGAHIDLPIDHLLAFYTALKLHYEHGRSTFGNKLLSTEMGPSDPYALLAANVMYDISLRENKSDYLFEALCLLQYVLRNSTSNFHVKLLSLKIYHMFGCLLGAQEMYEYLDIKQIQLDSMGYVHCQLLPLCGRFSGARNSYDTTMKFFTNSYKERLEYIALTYRFCTFSKMEEFLNFKERLTNSLQYVTCSLEAQICDLVSCYANVHQNLSTYTVMSIEPAEDRIAWHELSDNRDLDAIIRWDPLHQVDADAERKDSFDQEIEVLQLRSLMLRLYATFIDLYHPPPITKPSLSDGSKEETPAPAVESATSTLELLRDSWTGLYQRLRLMNYKPLPQQFLVNLLPTRLHLLLELPYERFFDDLAQLVLDLHSGAASLAAHCKKVGDNVIAVMELCVRTIEESNEWNNKDGLWKRRYQQQKVAASLEMLSLYAFLLSVLNDKLQVSSKTKVKKKQGDNKTQDTPQPVSEKERSQMVQELMRQLKHKLEACDAAIRTWKAPVLPRDLSSFMADMSLKPEVEATLIGDVSATFKDSHELMVTELRNLLKDKIRMVAK</sequence>